<comment type="function">
    <text evidence="1">Catalyzes the ferrous insertion into protoporphyrin IX.</text>
</comment>
<comment type="catalytic activity">
    <reaction evidence="1">
        <text>heme b + 2 H(+) = protoporphyrin IX + Fe(2+)</text>
        <dbReference type="Rhea" id="RHEA:22584"/>
        <dbReference type="ChEBI" id="CHEBI:15378"/>
        <dbReference type="ChEBI" id="CHEBI:29033"/>
        <dbReference type="ChEBI" id="CHEBI:57306"/>
        <dbReference type="ChEBI" id="CHEBI:60344"/>
        <dbReference type="EC" id="4.98.1.1"/>
    </reaction>
</comment>
<comment type="pathway">
    <text evidence="1">Porphyrin-containing compound metabolism; protoheme biosynthesis; protoheme from protoporphyrin-IX: step 1/1.</text>
</comment>
<comment type="subcellular location">
    <subcellularLocation>
        <location evidence="1">Cytoplasm</location>
    </subcellularLocation>
</comment>
<comment type="similarity">
    <text evidence="1">Belongs to the ferrochelatase family.</text>
</comment>
<reference key="1">
    <citation type="submission" date="2008-07" db="EMBL/GenBank/DDBJ databases">
        <title>Complete sequence of Geobacter bemidjiensis BEM.</title>
        <authorList>
            <consortium name="US DOE Joint Genome Institute"/>
            <person name="Lucas S."/>
            <person name="Copeland A."/>
            <person name="Lapidus A."/>
            <person name="Glavina del Rio T."/>
            <person name="Dalin E."/>
            <person name="Tice H."/>
            <person name="Bruce D."/>
            <person name="Goodwin L."/>
            <person name="Pitluck S."/>
            <person name="Kiss H."/>
            <person name="Brettin T."/>
            <person name="Detter J.C."/>
            <person name="Han C."/>
            <person name="Kuske C.R."/>
            <person name="Schmutz J."/>
            <person name="Larimer F."/>
            <person name="Land M."/>
            <person name="Hauser L."/>
            <person name="Kyrpides N."/>
            <person name="Lykidis A."/>
            <person name="Lovley D."/>
            <person name="Richardson P."/>
        </authorList>
    </citation>
    <scope>NUCLEOTIDE SEQUENCE [LARGE SCALE GENOMIC DNA]</scope>
    <source>
        <strain>ATCC BAA-1014 / DSM 16622 / JCM 12645 / Bem</strain>
    </source>
</reference>
<organism>
    <name type="scientific">Citrifermentans bemidjiense (strain ATCC BAA-1014 / DSM 16622 / JCM 12645 / Bem)</name>
    <name type="common">Geobacter bemidjiensis</name>
    <dbReference type="NCBI Taxonomy" id="404380"/>
    <lineage>
        <taxon>Bacteria</taxon>
        <taxon>Pseudomonadati</taxon>
        <taxon>Thermodesulfobacteriota</taxon>
        <taxon>Desulfuromonadia</taxon>
        <taxon>Geobacterales</taxon>
        <taxon>Geobacteraceae</taxon>
        <taxon>Citrifermentans</taxon>
    </lineage>
</organism>
<feature type="chain" id="PRO_1000116047" description="Ferrochelatase">
    <location>
        <begin position="1"/>
        <end position="317"/>
    </location>
</feature>
<feature type="binding site" evidence="1">
    <location>
        <position position="192"/>
    </location>
    <ligand>
        <name>Fe cation</name>
        <dbReference type="ChEBI" id="CHEBI:24875"/>
    </ligand>
</feature>
<feature type="binding site" evidence="1">
    <location>
        <position position="271"/>
    </location>
    <ligand>
        <name>Fe cation</name>
        <dbReference type="ChEBI" id="CHEBI:24875"/>
    </ligand>
</feature>
<evidence type="ECO:0000255" key="1">
    <source>
        <dbReference type="HAMAP-Rule" id="MF_00323"/>
    </source>
</evidence>
<protein>
    <recommendedName>
        <fullName evidence="1">Ferrochelatase</fullName>
        <ecNumber evidence="1">4.98.1.1</ecNumber>
    </recommendedName>
    <alternativeName>
        <fullName evidence="1">Heme synthase</fullName>
    </alternativeName>
    <alternativeName>
        <fullName evidence="1">Protoheme ferro-lyase</fullName>
    </alternativeName>
</protein>
<keyword id="KW-0963">Cytoplasm</keyword>
<keyword id="KW-0350">Heme biosynthesis</keyword>
<keyword id="KW-0408">Iron</keyword>
<keyword id="KW-0456">Lyase</keyword>
<keyword id="KW-0479">Metal-binding</keyword>
<keyword id="KW-0627">Porphyrin biosynthesis</keyword>
<keyword id="KW-1185">Reference proteome</keyword>
<name>HEMH_CITBB</name>
<gene>
    <name evidence="1" type="primary">hemH</name>
    <name type="ordered locus">Gbem_0039</name>
</gene>
<proteinExistence type="inferred from homology"/>
<accession>B5EJ44</accession>
<dbReference type="EC" id="4.98.1.1" evidence="1"/>
<dbReference type="EMBL" id="CP001124">
    <property type="protein sequence ID" value="ACH37070.1"/>
    <property type="molecule type" value="Genomic_DNA"/>
</dbReference>
<dbReference type="RefSeq" id="WP_012528480.1">
    <property type="nucleotide sequence ID" value="NC_011146.1"/>
</dbReference>
<dbReference type="SMR" id="B5EJ44"/>
<dbReference type="STRING" id="404380.Gbem_0039"/>
<dbReference type="KEGG" id="gbm:Gbem_0039"/>
<dbReference type="eggNOG" id="COG0276">
    <property type="taxonomic scope" value="Bacteria"/>
</dbReference>
<dbReference type="HOGENOM" id="CLU_018884_4_1_7"/>
<dbReference type="OrthoDB" id="9809741at2"/>
<dbReference type="UniPathway" id="UPA00252">
    <property type="reaction ID" value="UER00325"/>
</dbReference>
<dbReference type="Proteomes" id="UP000008825">
    <property type="component" value="Chromosome"/>
</dbReference>
<dbReference type="GO" id="GO:0005737">
    <property type="term" value="C:cytoplasm"/>
    <property type="evidence" value="ECO:0007669"/>
    <property type="project" value="UniProtKB-SubCell"/>
</dbReference>
<dbReference type="GO" id="GO:0004325">
    <property type="term" value="F:ferrochelatase activity"/>
    <property type="evidence" value="ECO:0007669"/>
    <property type="project" value="UniProtKB-UniRule"/>
</dbReference>
<dbReference type="GO" id="GO:0046872">
    <property type="term" value="F:metal ion binding"/>
    <property type="evidence" value="ECO:0007669"/>
    <property type="project" value="UniProtKB-KW"/>
</dbReference>
<dbReference type="GO" id="GO:0006783">
    <property type="term" value="P:heme biosynthetic process"/>
    <property type="evidence" value="ECO:0007669"/>
    <property type="project" value="UniProtKB-UniRule"/>
</dbReference>
<dbReference type="CDD" id="cd00419">
    <property type="entry name" value="Ferrochelatase_C"/>
    <property type="match status" value="1"/>
</dbReference>
<dbReference type="CDD" id="cd03411">
    <property type="entry name" value="Ferrochelatase_N"/>
    <property type="match status" value="1"/>
</dbReference>
<dbReference type="Gene3D" id="3.40.50.1400">
    <property type="match status" value="2"/>
</dbReference>
<dbReference type="HAMAP" id="MF_00323">
    <property type="entry name" value="Ferrochelatase"/>
    <property type="match status" value="1"/>
</dbReference>
<dbReference type="InterPro" id="IPR001015">
    <property type="entry name" value="Ferrochelatase"/>
</dbReference>
<dbReference type="InterPro" id="IPR019772">
    <property type="entry name" value="Ferrochelatase_AS"/>
</dbReference>
<dbReference type="InterPro" id="IPR033644">
    <property type="entry name" value="Ferrochelatase_C"/>
</dbReference>
<dbReference type="InterPro" id="IPR033659">
    <property type="entry name" value="Ferrochelatase_N"/>
</dbReference>
<dbReference type="NCBIfam" id="TIGR00109">
    <property type="entry name" value="hemH"/>
    <property type="match status" value="1"/>
</dbReference>
<dbReference type="PANTHER" id="PTHR11108">
    <property type="entry name" value="FERROCHELATASE"/>
    <property type="match status" value="1"/>
</dbReference>
<dbReference type="PANTHER" id="PTHR11108:SF1">
    <property type="entry name" value="FERROCHELATASE, MITOCHONDRIAL"/>
    <property type="match status" value="1"/>
</dbReference>
<dbReference type="Pfam" id="PF00762">
    <property type="entry name" value="Ferrochelatase"/>
    <property type="match status" value="1"/>
</dbReference>
<dbReference type="SUPFAM" id="SSF53800">
    <property type="entry name" value="Chelatase"/>
    <property type="match status" value="1"/>
</dbReference>
<dbReference type="PROSITE" id="PS00534">
    <property type="entry name" value="FERROCHELATASE"/>
    <property type="match status" value="1"/>
</dbReference>
<sequence length="317" mass="35573">MSSKTALLLLQMGGPDSLDAVHPFLMNLFTDRDIIKIGPAFLQPFIARRIVNKRAPKVEEYYRQIGGKSPIRELTEAQGEGLQQLLGEDFRSFVAMRYSRPSTIDALAAIKRAGIERVIALSLYPHYSKATTGSSLNELKRVLKESGAKFEISYIDRFYNHPLYIKALSEKVVQGLASFPDRKDVEIVFSAHSLPQSFIEEGDPYLDHIQETVRLVMEQVGEGSHTLCFQSKASRVKWLEPSTEATIEQMAKAGKKNLLMVPLSFVSDHIETLYEIDIQYGEEAKALGIERFVRSESLNSSPLFLECLADLVKTAAK</sequence>